<keyword id="KW-0028">Amino-acid biosynthesis</keyword>
<keyword id="KW-0963">Cytoplasm</keyword>
<keyword id="KW-0368">Histidine biosynthesis</keyword>
<keyword id="KW-0413">Isomerase</keyword>
<keyword id="KW-1185">Reference proteome</keyword>
<protein>
    <recommendedName>
        <fullName evidence="1">1-(5-phosphoribosyl)-5-[(5-phosphoribosylamino)methylideneamino] imidazole-4-carboxamide isomerase</fullName>
        <ecNumber evidence="1">5.3.1.16</ecNumber>
    </recommendedName>
    <alternativeName>
        <fullName evidence="1">Phosphoribosylformimino-5-aminoimidazole carboxamide ribotide isomerase</fullName>
    </alternativeName>
</protein>
<comment type="catalytic activity">
    <reaction evidence="1">
        <text>1-(5-phospho-beta-D-ribosyl)-5-[(5-phospho-beta-D-ribosylamino)methylideneamino]imidazole-4-carboxamide = 5-[(5-phospho-1-deoxy-D-ribulos-1-ylimino)methylamino]-1-(5-phospho-beta-D-ribosyl)imidazole-4-carboxamide</text>
        <dbReference type="Rhea" id="RHEA:15469"/>
        <dbReference type="ChEBI" id="CHEBI:58435"/>
        <dbReference type="ChEBI" id="CHEBI:58525"/>
        <dbReference type="EC" id="5.3.1.16"/>
    </reaction>
</comment>
<comment type="pathway">
    <text evidence="1">Amino-acid biosynthesis; L-histidine biosynthesis; L-histidine from 5-phospho-alpha-D-ribose 1-diphosphate: step 4/9.</text>
</comment>
<comment type="subcellular location">
    <subcellularLocation>
        <location evidence="1">Cytoplasm</location>
    </subcellularLocation>
</comment>
<comment type="similarity">
    <text evidence="1">Belongs to the HisA/HisF family.</text>
</comment>
<accession>Q5KVC9</accession>
<feature type="chain" id="PRO_0000229057" description="1-(5-phosphoribosyl)-5-[(5-phosphoribosylamino)methylideneamino] imidazole-4-carboxamide isomerase">
    <location>
        <begin position="1"/>
        <end position="245"/>
    </location>
</feature>
<feature type="active site" description="Proton acceptor" evidence="1">
    <location>
        <position position="11"/>
    </location>
</feature>
<feature type="active site" description="Proton donor" evidence="1">
    <location>
        <position position="132"/>
    </location>
</feature>
<name>HIS4_GEOKA</name>
<sequence length="245" mass="26150">MAAFTIYPAVDMRGGKCVRLLQGDYNKETVYGDSPVAMAEQFAAQGAEWIHMVDLDGAKEGRRVNDRFVIEAARRLSVHVQVGGGIRTEEDIVHYLENGVARVILGSAAISDPPFVKKMLQKYGRRIVIGIDARDGFVATEGWLATSNVKAEELGRMLAEAGAETFIFTDIATDGTLSGPNIAAAVRLAEATGKEVIASGGVSSLDDLRALCQYAGQGIGGAIVGKALYTNQFTLAEALKVVNER</sequence>
<evidence type="ECO:0000255" key="1">
    <source>
        <dbReference type="HAMAP-Rule" id="MF_01014"/>
    </source>
</evidence>
<reference key="1">
    <citation type="journal article" date="2004" name="Nucleic Acids Res.">
        <title>Thermoadaptation trait revealed by the genome sequence of thermophilic Geobacillus kaustophilus.</title>
        <authorList>
            <person name="Takami H."/>
            <person name="Takaki Y."/>
            <person name="Chee G.-J."/>
            <person name="Nishi S."/>
            <person name="Shimamura S."/>
            <person name="Suzuki H."/>
            <person name="Matsui S."/>
            <person name="Uchiyama I."/>
        </authorList>
    </citation>
    <scope>NUCLEOTIDE SEQUENCE [LARGE SCALE GENOMIC DNA]</scope>
    <source>
        <strain>HTA426</strain>
    </source>
</reference>
<gene>
    <name evidence="1" type="primary">hisA</name>
    <name type="ordered locus">GK3072</name>
</gene>
<proteinExistence type="inferred from homology"/>
<organism>
    <name type="scientific">Geobacillus kaustophilus (strain HTA426)</name>
    <dbReference type="NCBI Taxonomy" id="235909"/>
    <lineage>
        <taxon>Bacteria</taxon>
        <taxon>Bacillati</taxon>
        <taxon>Bacillota</taxon>
        <taxon>Bacilli</taxon>
        <taxon>Bacillales</taxon>
        <taxon>Anoxybacillaceae</taxon>
        <taxon>Geobacillus</taxon>
        <taxon>Geobacillus thermoleovorans group</taxon>
    </lineage>
</organism>
<dbReference type="EC" id="5.3.1.16" evidence="1"/>
<dbReference type="EMBL" id="BA000043">
    <property type="protein sequence ID" value="BAD77357.1"/>
    <property type="molecule type" value="Genomic_DNA"/>
</dbReference>
<dbReference type="RefSeq" id="WP_011232542.1">
    <property type="nucleotide sequence ID" value="NC_006510.1"/>
</dbReference>
<dbReference type="SMR" id="Q5KVC9"/>
<dbReference type="STRING" id="235909.GK3072"/>
<dbReference type="KEGG" id="gka:GK3072"/>
<dbReference type="PATRIC" id="fig|235909.7.peg.3279"/>
<dbReference type="eggNOG" id="COG0106">
    <property type="taxonomic scope" value="Bacteria"/>
</dbReference>
<dbReference type="HOGENOM" id="CLU_048577_1_1_9"/>
<dbReference type="UniPathway" id="UPA00031">
    <property type="reaction ID" value="UER00009"/>
</dbReference>
<dbReference type="Proteomes" id="UP000001172">
    <property type="component" value="Chromosome"/>
</dbReference>
<dbReference type="GO" id="GO:0005737">
    <property type="term" value="C:cytoplasm"/>
    <property type="evidence" value="ECO:0007669"/>
    <property type="project" value="UniProtKB-SubCell"/>
</dbReference>
<dbReference type="GO" id="GO:0003949">
    <property type="term" value="F:1-(5-phosphoribosyl)-5-[(5-phosphoribosylamino)methylideneamino]imidazole-4-carboxamide isomerase activity"/>
    <property type="evidence" value="ECO:0007669"/>
    <property type="project" value="UniProtKB-UniRule"/>
</dbReference>
<dbReference type="GO" id="GO:0000105">
    <property type="term" value="P:L-histidine biosynthetic process"/>
    <property type="evidence" value="ECO:0007669"/>
    <property type="project" value="UniProtKB-UniRule"/>
</dbReference>
<dbReference type="GO" id="GO:0000162">
    <property type="term" value="P:L-tryptophan biosynthetic process"/>
    <property type="evidence" value="ECO:0007669"/>
    <property type="project" value="TreeGrafter"/>
</dbReference>
<dbReference type="CDD" id="cd04732">
    <property type="entry name" value="HisA"/>
    <property type="match status" value="1"/>
</dbReference>
<dbReference type="FunFam" id="3.20.20.70:FF:000009">
    <property type="entry name" value="1-(5-phosphoribosyl)-5-[(5-phosphoribosylamino)methylideneamino] imidazole-4-carboxamide isomerase"/>
    <property type="match status" value="1"/>
</dbReference>
<dbReference type="Gene3D" id="3.20.20.70">
    <property type="entry name" value="Aldolase class I"/>
    <property type="match status" value="1"/>
</dbReference>
<dbReference type="HAMAP" id="MF_01014">
    <property type="entry name" value="HisA"/>
    <property type="match status" value="1"/>
</dbReference>
<dbReference type="InterPro" id="IPR013785">
    <property type="entry name" value="Aldolase_TIM"/>
</dbReference>
<dbReference type="InterPro" id="IPR006062">
    <property type="entry name" value="His_biosynth"/>
</dbReference>
<dbReference type="InterPro" id="IPR006063">
    <property type="entry name" value="HisA_bact_arch"/>
</dbReference>
<dbReference type="InterPro" id="IPR044524">
    <property type="entry name" value="Isoase_HisA-like"/>
</dbReference>
<dbReference type="InterPro" id="IPR023016">
    <property type="entry name" value="Isoase_HisA-like_bact"/>
</dbReference>
<dbReference type="InterPro" id="IPR011060">
    <property type="entry name" value="RibuloseP-bd_barrel"/>
</dbReference>
<dbReference type="NCBIfam" id="TIGR00007">
    <property type="entry name" value="1-(5-phosphoribosyl)-5-[(5-phosphoribosylamino)methylideneamino]imidazole-4-carboxamide isomerase"/>
    <property type="match status" value="1"/>
</dbReference>
<dbReference type="PANTHER" id="PTHR43090">
    <property type="entry name" value="1-(5-PHOSPHORIBOSYL)-5-[(5-PHOSPHORIBOSYLAMINO)METHYLIDENEAMINO] IMIDAZOLE-4-CARBOXAMIDE ISOMERASE"/>
    <property type="match status" value="1"/>
</dbReference>
<dbReference type="PANTHER" id="PTHR43090:SF2">
    <property type="entry name" value="1-(5-PHOSPHORIBOSYL)-5-[(5-PHOSPHORIBOSYLAMINO)METHYLIDENEAMINO] IMIDAZOLE-4-CARBOXAMIDE ISOMERASE"/>
    <property type="match status" value="1"/>
</dbReference>
<dbReference type="Pfam" id="PF00977">
    <property type="entry name" value="His_biosynth"/>
    <property type="match status" value="1"/>
</dbReference>
<dbReference type="SUPFAM" id="SSF51366">
    <property type="entry name" value="Ribulose-phoshate binding barrel"/>
    <property type="match status" value="1"/>
</dbReference>